<protein>
    <recommendedName>
        <fullName>Complement factor D</fullName>
        <ecNumber>3.4.21.46</ecNumber>
    </recommendedName>
    <alternativeName>
        <fullName>Adipsin</fullName>
    </alternativeName>
    <alternativeName>
        <fullName>C3 convertase activator</fullName>
    </alternativeName>
    <alternativeName>
        <fullName>Properdin factor D</fullName>
    </alternativeName>
</protein>
<feature type="signal peptide" evidence="2">
    <location>
        <begin position="1"/>
        <end position="21"/>
    </location>
</feature>
<feature type="propeptide" id="PRO_0000285859" description="Activation peptide" evidence="2">
    <location>
        <begin position="22"/>
        <end position="26"/>
    </location>
</feature>
<feature type="chain" id="PRO_0000285860" description="Complement factor D">
    <location>
        <begin position="27"/>
        <end position="259"/>
    </location>
</feature>
<feature type="domain" description="Peptidase S1" evidence="3">
    <location>
        <begin position="27"/>
        <end position="254"/>
    </location>
</feature>
<feature type="region of interest" description="Self-inhibitor loop" evidence="1">
    <location>
        <begin position="224"/>
        <end position="228"/>
    </location>
</feature>
<feature type="active site" description="Charge relay system" evidence="1">
    <location>
        <position position="67"/>
    </location>
</feature>
<feature type="active site" description="Charge relay system" evidence="1">
    <location>
        <position position="115"/>
    </location>
</feature>
<feature type="active site" description="Charge relay system" evidence="1">
    <location>
        <position position="209"/>
    </location>
</feature>
<feature type="site" description="Cleavage; by MASP-3 isoform of MASP1" evidence="1">
    <location>
        <begin position="26"/>
        <end position="27"/>
    </location>
</feature>
<feature type="disulfide bond" evidence="3">
    <location>
        <begin position="52"/>
        <end position="68"/>
    </location>
</feature>
<feature type="disulfide bond" evidence="3">
    <location>
        <begin position="149"/>
        <end position="215"/>
    </location>
</feature>
<feature type="disulfide bond" evidence="3">
    <location>
        <begin position="180"/>
        <end position="196"/>
    </location>
</feature>
<feature type="disulfide bond" evidence="3">
    <location>
        <begin position="205"/>
        <end position="230"/>
    </location>
</feature>
<sequence length="259" mass="27878">MADRSLHLVVLILLGTALCAAQPRGRILRGQEAPSHSRPYMASVQVNGKHVCGGFLIAEQWVMSAAHCLEDVADGKVQVLLGAHSLSQPEPSKRLYDVLRVVPHPGSRTETIDHDLLLLQLSEKAVLGPAVQLLPWQREDRDVAAGTLCDVAGWGVVSHTGRKPDRLQHLLLPVLDRATCNLRTYHDGTITERMMCAESNRRDTCKGDSGGPLVCGSVAEGVVTSGSRICGNHKKPGIYTRLASYVAWIDGVMAEGAAA</sequence>
<comment type="function">
    <text evidence="1">Serine protease that initiates the alternative pathway of the complement system, a cascade of proteins that leads to phagocytosis and breakdown of pathogens and signaling that strengthens the adaptive immune system. In contrast to other complement pathways (classical, lectin and GZMK) that are directly activated by pathogens or antigen-antibody complexes, the alternative complement pathway is initiated by the spontaneous hydrolysis of complement C3. The alternative complement pathway acts as an amplification loop that enhances complement activation by mediating the formation of C3 and C5 convertases. Activated CFD cleaves factor B (CFB) when the latter is complexed with complement C3b, activating the C3 convertase of the alternative pathway.</text>
</comment>
<comment type="catalytic activity">
    <reaction evidence="1">
        <text>Selective cleavage of Arg-|-Lys bond in complement factor B when in complex with complement subcomponent C3b or with cobra venom factor.</text>
        <dbReference type="EC" id="3.4.21.46"/>
    </reaction>
</comment>
<comment type="activity regulation">
    <text evidence="1">Circulates in plasma in a mature but self-inhibited form. Activated by factor B (CFB), which displaces the self-inhibition loop. Associates with CFB complexed with complement C3b.</text>
</comment>
<comment type="subcellular location">
    <subcellularLocation>
        <location evidence="1">Secreted</location>
    </subcellularLocation>
</comment>
<comment type="domain">
    <text evidence="1">The self-inhibition loop inihibits the serine protease activity in absence of factor B (CFB) substrate.</text>
</comment>
<comment type="PTM">
    <text evidence="1">CFD is activated by the removal of 5 residues at the N-terminus, named activation peptide, by the MASP-3 isoform of MASP1.</text>
</comment>
<comment type="similarity">
    <text evidence="3">Belongs to the peptidase S1 family.</text>
</comment>
<gene>
    <name type="primary">CFD</name>
</gene>
<organism>
    <name type="scientific">Bos taurus</name>
    <name type="common">Bovine</name>
    <dbReference type="NCBI Taxonomy" id="9913"/>
    <lineage>
        <taxon>Eukaryota</taxon>
        <taxon>Metazoa</taxon>
        <taxon>Chordata</taxon>
        <taxon>Craniata</taxon>
        <taxon>Vertebrata</taxon>
        <taxon>Euteleostomi</taxon>
        <taxon>Mammalia</taxon>
        <taxon>Eutheria</taxon>
        <taxon>Laurasiatheria</taxon>
        <taxon>Artiodactyla</taxon>
        <taxon>Ruminantia</taxon>
        <taxon>Pecora</taxon>
        <taxon>Bovidae</taxon>
        <taxon>Bovinae</taxon>
        <taxon>Bos</taxon>
    </lineage>
</organism>
<proteinExistence type="evidence at transcript level"/>
<dbReference type="EC" id="3.4.21.46"/>
<dbReference type="EMBL" id="BC102479">
    <property type="protein sequence ID" value="AAI02480.1"/>
    <property type="molecule type" value="mRNA"/>
</dbReference>
<dbReference type="RefSeq" id="NP_001029427.1">
    <property type="nucleotide sequence ID" value="NM_001034255.2"/>
</dbReference>
<dbReference type="RefSeq" id="XP_005209319.1">
    <property type="nucleotide sequence ID" value="XM_005209262.1"/>
</dbReference>
<dbReference type="SMR" id="Q3T0A3"/>
<dbReference type="FunCoup" id="Q3T0A3">
    <property type="interactions" value="219"/>
</dbReference>
<dbReference type="STRING" id="9913.ENSBTAP00000055802"/>
<dbReference type="MEROPS" id="S01.191"/>
<dbReference type="PaxDb" id="9913-ENSBTAP00000055802"/>
<dbReference type="Ensembl" id="ENSBTAT00000063284.3">
    <property type="protein sequence ID" value="ENSBTAP00000055802.1"/>
    <property type="gene ID" value="ENSBTAG00000048122.3"/>
</dbReference>
<dbReference type="GeneID" id="505647"/>
<dbReference type="KEGG" id="bta:505647"/>
<dbReference type="CTD" id="1675"/>
<dbReference type="VEuPathDB" id="HostDB:ENSBTAG00000048122"/>
<dbReference type="VGNC" id="VGNC:97253">
    <property type="gene designation" value="CFD"/>
</dbReference>
<dbReference type="eggNOG" id="KOG3627">
    <property type="taxonomic scope" value="Eukaryota"/>
</dbReference>
<dbReference type="GeneTree" id="ENSGT00940000162255"/>
<dbReference type="HOGENOM" id="CLU_006842_7_0_1"/>
<dbReference type="InParanoid" id="Q3T0A3"/>
<dbReference type="OMA" id="YTRTAPY"/>
<dbReference type="OrthoDB" id="60866at2759"/>
<dbReference type="TreeFam" id="TF333630"/>
<dbReference type="Reactome" id="R-BTA-114608">
    <property type="pathway name" value="Platelet degranulation"/>
</dbReference>
<dbReference type="Reactome" id="R-BTA-173736">
    <property type="pathway name" value="Alternative complement activation"/>
</dbReference>
<dbReference type="Reactome" id="R-BTA-6798695">
    <property type="pathway name" value="Neutrophil degranulation"/>
</dbReference>
<dbReference type="Proteomes" id="UP000009136">
    <property type="component" value="Chromosome 7"/>
</dbReference>
<dbReference type="Bgee" id="ENSBTAG00000048122">
    <property type="expression patterns" value="Expressed in lung and 103 other cell types or tissues"/>
</dbReference>
<dbReference type="GO" id="GO:0005615">
    <property type="term" value="C:extracellular space"/>
    <property type="evidence" value="ECO:0000318"/>
    <property type="project" value="GO_Central"/>
</dbReference>
<dbReference type="GO" id="GO:0004252">
    <property type="term" value="F:serine-type endopeptidase activity"/>
    <property type="evidence" value="ECO:0000318"/>
    <property type="project" value="GO_Central"/>
</dbReference>
<dbReference type="GO" id="GO:0006957">
    <property type="term" value="P:complement activation, alternative pathway"/>
    <property type="evidence" value="ECO:0007669"/>
    <property type="project" value="UniProtKB-KW"/>
</dbReference>
<dbReference type="GO" id="GO:0051604">
    <property type="term" value="P:protein maturation"/>
    <property type="evidence" value="ECO:0000318"/>
    <property type="project" value="GO_Central"/>
</dbReference>
<dbReference type="GO" id="GO:0006508">
    <property type="term" value="P:proteolysis"/>
    <property type="evidence" value="ECO:0007669"/>
    <property type="project" value="UniProtKB-KW"/>
</dbReference>
<dbReference type="GO" id="GO:0009617">
    <property type="term" value="P:response to bacterium"/>
    <property type="evidence" value="ECO:0007669"/>
    <property type="project" value="Ensembl"/>
</dbReference>
<dbReference type="CDD" id="cd00190">
    <property type="entry name" value="Tryp_SPc"/>
    <property type="match status" value="1"/>
</dbReference>
<dbReference type="FunFam" id="2.40.10.10:FF:000014">
    <property type="entry name" value="Complement factor D"/>
    <property type="match status" value="1"/>
</dbReference>
<dbReference type="FunFam" id="2.40.10.10:FF:000005">
    <property type="entry name" value="Serine protease 37"/>
    <property type="match status" value="1"/>
</dbReference>
<dbReference type="Gene3D" id="2.40.10.10">
    <property type="entry name" value="Trypsin-like serine proteases"/>
    <property type="match status" value="2"/>
</dbReference>
<dbReference type="InterPro" id="IPR009003">
    <property type="entry name" value="Peptidase_S1_PA"/>
</dbReference>
<dbReference type="InterPro" id="IPR043504">
    <property type="entry name" value="Peptidase_S1_PA_chymotrypsin"/>
</dbReference>
<dbReference type="InterPro" id="IPR001314">
    <property type="entry name" value="Peptidase_S1A"/>
</dbReference>
<dbReference type="InterPro" id="IPR001254">
    <property type="entry name" value="Trypsin_dom"/>
</dbReference>
<dbReference type="InterPro" id="IPR018114">
    <property type="entry name" value="TRYPSIN_HIS"/>
</dbReference>
<dbReference type="InterPro" id="IPR033116">
    <property type="entry name" value="TRYPSIN_SER"/>
</dbReference>
<dbReference type="PANTHER" id="PTHR24271:SF54">
    <property type="entry name" value="COMPLEMENT FACTOR D"/>
    <property type="match status" value="1"/>
</dbReference>
<dbReference type="PANTHER" id="PTHR24271">
    <property type="entry name" value="KALLIKREIN-RELATED"/>
    <property type="match status" value="1"/>
</dbReference>
<dbReference type="Pfam" id="PF00089">
    <property type="entry name" value="Trypsin"/>
    <property type="match status" value="1"/>
</dbReference>
<dbReference type="PRINTS" id="PR00722">
    <property type="entry name" value="CHYMOTRYPSIN"/>
</dbReference>
<dbReference type="SMART" id="SM00020">
    <property type="entry name" value="Tryp_SPc"/>
    <property type="match status" value="1"/>
</dbReference>
<dbReference type="SUPFAM" id="SSF50494">
    <property type="entry name" value="Trypsin-like serine proteases"/>
    <property type="match status" value="1"/>
</dbReference>
<dbReference type="PROSITE" id="PS50240">
    <property type="entry name" value="TRYPSIN_DOM"/>
    <property type="match status" value="1"/>
</dbReference>
<dbReference type="PROSITE" id="PS00134">
    <property type="entry name" value="TRYPSIN_HIS"/>
    <property type="match status" value="1"/>
</dbReference>
<dbReference type="PROSITE" id="PS00135">
    <property type="entry name" value="TRYPSIN_SER"/>
    <property type="match status" value="1"/>
</dbReference>
<name>CFAD_BOVIN</name>
<reference key="1">
    <citation type="submission" date="2005-08" db="EMBL/GenBank/DDBJ databases">
        <authorList>
            <consortium name="NIH - Mammalian Gene Collection (MGC) project"/>
        </authorList>
    </citation>
    <scope>NUCLEOTIDE SEQUENCE [LARGE SCALE MRNA]</scope>
    <source>
        <strain>Crossbred X Angus</strain>
        <tissue>Ileum</tissue>
    </source>
</reference>
<accession>Q3T0A3</accession>
<keyword id="KW-0179">Complement alternate pathway</keyword>
<keyword id="KW-1015">Disulfide bond</keyword>
<keyword id="KW-0378">Hydrolase</keyword>
<keyword id="KW-0391">Immunity</keyword>
<keyword id="KW-0399">Innate immunity</keyword>
<keyword id="KW-0645">Protease</keyword>
<keyword id="KW-1185">Reference proteome</keyword>
<keyword id="KW-0964">Secreted</keyword>
<keyword id="KW-0720">Serine protease</keyword>
<keyword id="KW-0732">Signal</keyword>
<keyword id="KW-0865">Zymogen</keyword>
<evidence type="ECO:0000250" key="1">
    <source>
        <dbReference type="UniProtKB" id="P00746"/>
    </source>
</evidence>
<evidence type="ECO:0000255" key="2"/>
<evidence type="ECO:0000255" key="3">
    <source>
        <dbReference type="PROSITE-ProRule" id="PRU00274"/>
    </source>
</evidence>